<organism>
    <name type="scientific">Prochlorococcus marinus (strain NATL2A)</name>
    <dbReference type="NCBI Taxonomy" id="59920"/>
    <lineage>
        <taxon>Bacteria</taxon>
        <taxon>Bacillati</taxon>
        <taxon>Cyanobacteriota</taxon>
        <taxon>Cyanophyceae</taxon>
        <taxon>Synechococcales</taxon>
        <taxon>Prochlorococcaceae</taxon>
        <taxon>Prochlorococcus</taxon>
    </lineage>
</organism>
<evidence type="ECO:0000255" key="1">
    <source>
        <dbReference type="HAMAP-Rule" id="MF_01344"/>
    </source>
</evidence>
<gene>
    <name evidence="1" type="primary">petD</name>
    <name type="ordered locus">PMN2A_1703</name>
</gene>
<name>PETD_PROMT</name>
<accession>Q46M01</accession>
<protein>
    <recommendedName>
        <fullName evidence="1">Cytochrome b6-f complex subunit 4</fullName>
    </recommendedName>
    <alternativeName>
        <fullName evidence="1">17 kDa polypeptide</fullName>
    </alternativeName>
</protein>
<comment type="function">
    <text evidence="1">Component of the cytochrome b6-f complex, which mediates electron transfer between photosystem II (PSII) and photosystem I (PSI), cyclic electron flow around PSI, and state transitions.</text>
</comment>
<comment type="subunit">
    <text evidence="1">The 4 large subunits of the cytochrome b6-f complex are cytochrome b6, subunit IV (17 kDa polypeptide, PetD), cytochrome f and the Rieske protein, while the 4 small subunits are PetG, PetL, PetM and PetN. The complex functions as a dimer.</text>
</comment>
<comment type="subcellular location">
    <subcellularLocation>
        <location evidence="1">Cellular thylakoid membrane</location>
        <topology evidence="1">Multi-pass membrane protein</topology>
    </subcellularLocation>
</comment>
<comment type="similarity">
    <text evidence="1">Belongs to the cytochrome b family. PetD subfamily.</text>
</comment>
<dbReference type="EMBL" id="CP000095">
    <property type="protein sequence ID" value="AAZ59191.1"/>
    <property type="molecule type" value="Genomic_DNA"/>
</dbReference>
<dbReference type="RefSeq" id="WP_011294337.1">
    <property type="nucleotide sequence ID" value="NC_007335.2"/>
</dbReference>
<dbReference type="SMR" id="Q46M01"/>
<dbReference type="STRING" id="59920.PMN2A_1703"/>
<dbReference type="KEGG" id="pmn:PMN2A_1703"/>
<dbReference type="HOGENOM" id="CLU_112652_0_0_3"/>
<dbReference type="OrthoDB" id="529454at2"/>
<dbReference type="PhylomeDB" id="Q46M01"/>
<dbReference type="Proteomes" id="UP000002535">
    <property type="component" value="Chromosome"/>
</dbReference>
<dbReference type="GO" id="GO:0031676">
    <property type="term" value="C:plasma membrane-derived thylakoid membrane"/>
    <property type="evidence" value="ECO:0007669"/>
    <property type="project" value="UniProtKB-SubCell"/>
</dbReference>
<dbReference type="GO" id="GO:0045158">
    <property type="term" value="F:electron transporter, transferring electrons within cytochrome b6/f complex of photosystem II activity"/>
    <property type="evidence" value="ECO:0007669"/>
    <property type="project" value="UniProtKB-UniRule"/>
</dbReference>
<dbReference type="GO" id="GO:0045156">
    <property type="term" value="F:electron transporter, transferring electrons within the cyclic electron transport pathway of photosynthesis activity"/>
    <property type="evidence" value="ECO:0007669"/>
    <property type="project" value="InterPro"/>
</dbReference>
<dbReference type="GO" id="GO:0008121">
    <property type="term" value="F:ubiquinol-cytochrome-c reductase activity"/>
    <property type="evidence" value="ECO:0007669"/>
    <property type="project" value="TreeGrafter"/>
</dbReference>
<dbReference type="GO" id="GO:0009767">
    <property type="term" value="P:photosynthetic electron transport chain"/>
    <property type="evidence" value="ECO:0007669"/>
    <property type="project" value="InterPro"/>
</dbReference>
<dbReference type="CDD" id="cd00290">
    <property type="entry name" value="cytochrome_b_C"/>
    <property type="match status" value="1"/>
</dbReference>
<dbReference type="FunFam" id="1.10.287.980:FF:000001">
    <property type="entry name" value="Cytochrome b6-f complex subunit 4"/>
    <property type="match status" value="1"/>
</dbReference>
<dbReference type="FunFam" id="1.20.5.510:FF:000002">
    <property type="entry name" value="Cytochrome b6-f complex subunit 4"/>
    <property type="match status" value="1"/>
</dbReference>
<dbReference type="Gene3D" id="1.10.287.980">
    <property type="entry name" value="plastocyanin oxidoreductase"/>
    <property type="match status" value="1"/>
</dbReference>
<dbReference type="Gene3D" id="1.20.5.510">
    <property type="entry name" value="Single helix bin"/>
    <property type="match status" value="1"/>
</dbReference>
<dbReference type="HAMAP" id="MF_01344">
    <property type="entry name" value="Cytb6_f_subIV"/>
    <property type="match status" value="1"/>
</dbReference>
<dbReference type="InterPro" id="IPR005798">
    <property type="entry name" value="Cyt_b/b6_C"/>
</dbReference>
<dbReference type="InterPro" id="IPR036150">
    <property type="entry name" value="Cyt_b/b6_C_sf"/>
</dbReference>
<dbReference type="InterPro" id="IPR005870">
    <property type="entry name" value="Cyt_b6/f_cplx_suIV"/>
</dbReference>
<dbReference type="InterPro" id="IPR048260">
    <property type="entry name" value="Cytochrome_b_C_euk/bac"/>
</dbReference>
<dbReference type="NCBIfam" id="TIGR01156">
    <property type="entry name" value="cytb6_f_IV"/>
    <property type="match status" value="1"/>
</dbReference>
<dbReference type="PANTHER" id="PTHR19271">
    <property type="entry name" value="CYTOCHROME B"/>
    <property type="match status" value="1"/>
</dbReference>
<dbReference type="PANTHER" id="PTHR19271:SF41">
    <property type="entry name" value="CYTOCHROME B_B6 C-TERMINAL REGION PROFILE DOMAIN-CONTAINING PROTEIN"/>
    <property type="match status" value="1"/>
</dbReference>
<dbReference type="Pfam" id="PF00032">
    <property type="entry name" value="Cytochrom_B_C"/>
    <property type="match status" value="1"/>
</dbReference>
<dbReference type="PIRSF" id="PIRSF000033">
    <property type="entry name" value="B6f_17K"/>
    <property type="match status" value="1"/>
</dbReference>
<dbReference type="SUPFAM" id="SSF81648">
    <property type="entry name" value="a domain/subunit of cytochrome bc1 complex (Ubiquinol-cytochrome c reductase)"/>
    <property type="match status" value="1"/>
</dbReference>
<dbReference type="PROSITE" id="PS51003">
    <property type="entry name" value="CYTB_CTER"/>
    <property type="match status" value="1"/>
</dbReference>
<proteinExistence type="inferred from homology"/>
<keyword id="KW-0249">Electron transport</keyword>
<keyword id="KW-0472">Membrane</keyword>
<keyword id="KW-0602">Photosynthesis</keyword>
<keyword id="KW-1185">Reference proteome</keyword>
<keyword id="KW-0793">Thylakoid</keyword>
<keyword id="KW-0812">Transmembrane</keyword>
<keyword id="KW-1133">Transmembrane helix</keyword>
<keyword id="KW-0813">Transport</keyword>
<sequence>MSTLKKPDLTDTKLRAKLAKGMGHNYYGEPAWPNDLLYIFPVVILGTIACVVGLAVLDPAFLGDKANPFATPLEILPEWYLYPVFQILRVVPNKLLGIALQTLIPLGLMILPFIENINKFANPFRRPVAMSLFLFGTVLTMYLGIGACLPIDKSLTLGLF</sequence>
<reference key="1">
    <citation type="journal article" date="2007" name="PLoS Genet.">
        <title>Patterns and implications of gene gain and loss in the evolution of Prochlorococcus.</title>
        <authorList>
            <person name="Kettler G.C."/>
            <person name="Martiny A.C."/>
            <person name="Huang K."/>
            <person name="Zucker J."/>
            <person name="Coleman M.L."/>
            <person name="Rodrigue S."/>
            <person name="Chen F."/>
            <person name="Lapidus A."/>
            <person name="Ferriera S."/>
            <person name="Johnson J."/>
            <person name="Steglich C."/>
            <person name="Church G.M."/>
            <person name="Richardson P."/>
            <person name="Chisholm S.W."/>
        </authorList>
    </citation>
    <scope>NUCLEOTIDE SEQUENCE [LARGE SCALE GENOMIC DNA]</scope>
    <source>
        <strain>NATL2A</strain>
    </source>
</reference>
<feature type="chain" id="PRO_0000061907" description="Cytochrome b6-f complex subunit 4">
    <location>
        <begin position="1"/>
        <end position="160"/>
    </location>
</feature>
<feature type="transmembrane region" description="Helical" evidence="1">
    <location>
        <begin position="36"/>
        <end position="56"/>
    </location>
</feature>
<feature type="transmembrane region" description="Helical" evidence="1">
    <location>
        <begin position="95"/>
        <end position="115"/>
    </location>
</feature>
<feature type="transmembrane region" description="Helical" evidence="1">
    <location>
        <begin position="131"/>
        <end position="151"/>
    </location>
</feature>